<comment type="catalytic activity">
    <reaction>
        <text>L-seryl-[protein] + ATP = O-phospho-L-seryl-[protein] + ADP + H(+)</text>
        <dbReference type="Rhea" id="RHEA:17989"/>
        <dbReference type="Rhea" id="RHEA-COMP:9863"/>
        <dbReference type="Rhea" id="RHEA-COMP:11604"/>
        <dbReference type="ChEBI" id="CHEBI:15378"/>
        <dbReference type="ChEBI" id="CHEBI:29999"/>
        <dbReference type="ChEBI" id="CHEBI:30616"/>
        <dbReference type="ChEBI" id="CHEBI:83421"/>
        <dbReference type="ChEBI" id="CHEBI:456216"/>
        <dbReference type="EC" id="2.7.11.1"/>
    </reaction>
</comment>
<comment type="catalytic activity">
    <reaction>
        <text>L-threonyl-[protein] + ATP = O-phospho-L-threonyl-[protein] + ADP + H(+)</text>
        <dbReference type="Rhea" id="RHEA:46608"/>
        <dbReference type="Rhea" id="RHEA-COMP:11060"/>
        <dbReference type="Rhea" id="RHEA-COMP:11605"/>
        <dbReference type="ChEBI" id="CHEBI:15378"/>
        <dbReference type="ChEBI" id="CHEBI:30013"/>
        <dbReference type="ChEBI" id="CHEBI:30616"/>
        <dbReference type="ChEBI" id="CHEBI:61977"/>
        <dbReference type="ChEBI" id="CHEBI:456216"/>
        <dbReference type="EC" id="2.7.11.1"/>
    </reaction>
</comment>
<comment type="alternative products">
    <event type="alternative splicing"/>
    <isoform>
        <id>Q65X23-1</id>
        <name>1</name>
        <sequence type="displayed"/>
    </isoform>
    <isoform>
        <id>Q65X23-2</id>
        <name>2</name>
        <sequence type="described" ref="VSP_035536 VSP_035537 VSP_035538"/>
    </isoform>
</comment>
<comment type="similarity">
    <text evidence="3">Belongs to the protein kinase superfamily. Ser/Thr protein kinase family. WNK subfamily.</text>
</comment>
<comment type="caution">
    <text evidence="1">Was named WNK/'with no lysine(K)' because key residues for catalysis, including the lysine involved in ATP binding, are either not conserved or differ compared to the residues described in other kinase family proteins.</text>
</comment>
<sequence length="621" mass="70101">MPPTPPPELDLLDTEPEFAEVDPTARYGRYTEVLGKGAFKTVYKAFDQLEGLEVAWNQIKVGDILRNNDDLERLRSEVRLLKTLKHKNIIKFYNSWLDKKNNNINFITEVFTSGTLRQYRIKHKKVDVRALKKWSRQILSGLVYLHSHDPPVIHRDLKCDNIFVNGNQGEVKIGDLGLATILDNARSAHSIIGTPEFMAPELYDEEYNELVDIYAFGMCLLELVTFEYPYCECSNAAQIYKKVSDGEKPSSLAKIEDPEVRFFIEKCIAKASQRLSAQELLMDPFLRDDGEKIFYPLQSNTKASDGAGSSNSSMGYKYDRDASSMAIREHTGSFAEEHPSDRYIHSTMDPQAAAGRIITVESQMKDLNTIFLKLRIADSTGHAQNIHFPFDIEADTSISVATEMVVQLDLTDQDVTAIAEMIDAEIRAHIPDWALEESVENQGDERAHSETDSSEADDETSELRNEPNATHNGFVQEHLPSGHKYWSDSPRRNIEMSHSAVEPHIGGNMPNGILKKNDTDDTVSNLGTSVDLPNPSMIDRKSGVASVSTSPQSFDDEHIEADVSERLVNLLAQQQEELNVLRRKHKADIEVILKGVPEEHREETLTRCRLKADERNRSDKP</sequence>
<organism>
    <name type="scientific">Oryza sativa subsp. japonica</name>
    <name type="common">Rice</name>
    <dbReference type="NCBI Taxonomy" id="39947"/>
    <lineage>
        <taxon>Eukaryota</taxon>
        <taxon>Viridiplantae</taxon>
        <taxon>Streptophyta</taxon>
        <taxon>Embryophyta</taxon>
        <taxon>Tracheophyta</taxon>
        <taxon>Spermatophyta</taxon>
        <taxon>Magnoliopsida</taxon>
        <taxon>Liliopsida</taxon>
        <taxon>Poales</taxon>
        <taxon>Poaceae</taxon>
        <taxon>BOP clade</taxon>
        <taxon>Oryzoideae</taxon>
        <taxon>Oryzeae</taxon>
        <taxon>Oryzinae</taxon>
        <taxon>Oryza</taxon>
        <taxon>Oryza sativa</taxon>
    </lineage>
</organism>
<evidence type="ECO:0000250" key="1">
    <source>
        <dbReference type="UniProtKB" id="Q9H4A3"/>
    </source>
</evidence>
<evidence type="ECO:0000250" key="2">
    <source>
        <dbReference type="UniProtKB" id="Q9JIH7"/>
    </source>
</evidence>
<evidence type="ECO:0000255" key="3">
    <source>
        <dbReference type="PROSITE-ProRule" id="PRU00159"/>
    </source>
</evidence>
<evidence type="ECO:0000256" key="4">
    <source>
        <dbReference type="SAM" id="MobiDB-lite"/>
    </source>
</evidence>
<evidence type="ECO:0000303" key="5">
    <source ref="1"/>
</evidence>
<evidence type="ECO:0000305" key="6"/>
<evidence type="ECO:0000312" key="7">
    <source>
        <dbReference type="EMBL" id="EEE62052.1"/>
    </source>
</evidence>
<protein>
    <recommendedName>
        <fullName>Probable serine/threonine-protein kinase WNK2</fullName>
        <shortName>OsWNK2</shortName>
        <ecNumber>2.7.11.1</ecNumber>
    </recommendedName>
    <alternativeName>
        <fullName>Protein DISEASE RELATIVE SIGNAL 1</fullName>
    </alternativeName>
    <alternativeName>
        <fullName>Protein kinase with no lysine 2</fullName>
    </alternativeName>
</protein>
<accession>Q65X23</accession>
<accession>B9FM26</accession>
<accession>Q7XB94</accession>
<accession>Q94HK9</accession>
<keyword id="KW-0025">Alternative splicing</keyword>
<keyword id="KW-0067">ATP-binding</keyword>
<keyword id="KW-0418">Kinase</keyword>
<keyword id="KW-0547">Nucleotide-binding</keyword>
<keyword id="KW-1185">Reference proteome</keyword>
<keyword id="KW-0723">Serine/threonine-protein kinase</keyword>
<keyword id="KW-0808">Transferase</keyword>
<reference key="1">
    <citation type="submission" date="2003-07" db="EMBL/GenBank/DDBJ databases">
        <title>Characterization of a protein kinase gene in rice.</title>
        <authorList>
            <person name="Yao Q."/>
            <person name="Peng R."/>
            <person name="Xiong A."/>
        </authorList>
    </citation>
    <scope>NUCLEOTIDE SEQUENCE [MRNA] (ISOFORM 2)</scope>
</reference>
<reference key="2">
    <citation type="journal article" date="2005" name="Mol. Genet. Genomics">
        <title>A fine physical map of the rice chromosome 5.</title>
        <authorList>
            <person name="Cheng C.-H."/>
            <person name="Chung M.C."/>
            <person name="Liu S.-M."/>
            <person name="Chen S.-K."/>
            <person name="Kao F.Y."/>
            <person name="Lin S.-J."/>
            <person name="Hsiao S.-H."/>
            <person name="Tseng I.C."/>
            <person name="Hsing Y.-I.C."/>
            <person name="Wu H.-P."/>
            <person name="Chen C.-S."/>
            <person name="Shaw J.-F."/>
            <person name="Wu J."/>
            <person name="Matsumoto T."/>
            <person name="Sasaki T."/>
            <person name="Chen H.-C."/>
            <person name="Chow T.-Y."/>
        </authorList>
    </citation>
    <scope>NUCLEOTIDE SEQUENCE [LARGE SCALE GENOMIC DNA]</scope>
    <source>
        <strain>cv. Nipponbare</strain>
    </source>
</reference>
<reference key="3">
    <citation type="journal article" date="2005" name="Nature">
        <title>The map-based sequence of the rice genome.</title>
        <authorList>
            <consortium name="International rice genome sequencing project (IRGSP)"/>
        </authorList>
    </citation>
    <scope>NUCLEOTIDE SEQUENCE [LARGE SCALE GENOMIC DNA]</scope>
    <source>
        <strain>cv. Nipponbare</strain>
    </source>
</reference>
<reference key="4">
    <citation type="journal article" date="2008" name="Nucleic Acids Res.">
        <title>The rice annotation project database (RAP-DB): 2008 update.</title>
        <authorList>
            <consortium name="The rice annotation project (RAP)"/>
        </authorList>
    </citation>
    <scope>GENOME REANNOTATION</scope>
    <source>
        <strain>cv. Nipponbare</strain>
    </source>
</reference>
<reference key="5">
    <citation type="journal article" date="2013" name="Rice">
        <title>Improvement of the Oryza sativa Nipponbare reference genome using next generation sequence and optical map data.</title>
        <authorList>
            <person name="Kawahara Y."/>
            <person name="de la Bastide M."/>
            <person name="Hamilton J.P."/>
            <person name="Kanamori H."/>
            <person name="McCombie W.R."/>
            <person name="Ouyang S."/>
            <person name="Schwartz D.C."/>
            <person name="Tanaka T."/>
            <person name="Wu J."/>
            <person name="Zhou S."/>
            <person name="Childs K.L."/>
            <person name="Davidson R.M."/>
            <person name="Lin H."/>
            <person name="Quesada-Ocampo L."/>
            <person name="Vaillancourt B."/>
            <person name="Sakai H."/>
            <person name="Lee S.S."/>
            <person name="Kim J."/>
            <person name="Numa H."/>
            <person name="Itoh T."/>
            <person name="Buell C.R."/>
            <person name="Matsumoto T."/>
        </authorList>
    </citation>
    <scope>GENOME REANNOTATION</scope>
    <source>
        <strain>cv. Nipponbare</strain>
    </source>
</reference>
<reference key="6">
    <citation type="journal article" date="2005" name="PLoS Biol.">
        <title>The genomes of Oryza sativa: a history of duplications.</title>
        <authorList>
            <person name="Yu J."/>
            <person name="Wang J."/>
            <person name="Lin W."/>
            <person name="Li S."/>
            <person name="Li H."/>
            <person name="Zhou J."/>
            <person name="Ni P."/>
            <person name="Dong W."/>
            <person name="Hu S."/>
            <person name="Zeng C."/>
            <person name="Zhang J."/>
            <person name="Zhang Y."/>
            <person name="Li R."/>
            <person name="Xu Z."/>
            <person name="Li S."/>
            <person name="Li X."/>
            <person name="Zheng H."/>
            <person name="Cong L."/>
            <person name="Lin L."/>
            <person name="Yin J."/>
            <person name="Geng J."/>
            <person name="Li G."/>
            <person name="Shi J."/>
            <person name="Liu J."/>
            <person name="Lv H."/>
            <person name="Li J."/>
            <person name="Wang J."/>
            <person name="Deng Y."/>
            <person name="Ran L."/>
            <person name="Shi X."/>
            <person name="Wang X."/>
            <person name="Wu Q."/>
            <person name="Li C."/>
            <person name="Ren X."/>
            <person name="Wang J."/>
            <person name="Wang X."/>
            <person name="Li D."/>
            <person name="Liu D."/>
            <person name="Zhang X."/>
            <person name="Ji Z."/>
            <person name="Zhao W."/>
            <person name="Sun Y."/>
            <person name="Zhang Z."/>
            <person name="Bao J."/>
            <person name="Han Y."/>
            <person name="Dong L."/>
            <person name="Ji J."/>
            <person name="Chen P."/>
            <person name="Wu S."/>
            <person name="Liu J."/>
            <person name="Xiao Y."/>
            <person name="Bu D."/>
            <person name="Tan J."/>
            <person name="Yang L."/>
            <person name="Ye C."/>
            <person name="Zhang J."/>
            <person name="Xu J."/>
            <person name="Zhou Y."/>
            <person name="Yu Y."/>
            <person name="Zhang B."/>
            <person name="Zhuang S."/>
            <person name="Wei H."/>
            <person name="Liu B."/>
            <person name="Lei M."/>
            <person name="Yu H."/>
            <person name="Li Y."/>
            <person name="Xu H."/>
            <person name="Wei S."/>
            <person name="He X."/>
            <person name="Fang L."/>
            <person name="Zhang Z."/>
            <person name="Zhang Y."/>
            <person name="Huang X."/>
            <person name="Su Z."/>
            <person name="Tong W."/>
            <person name="Li J."/>
            <person name="Tong Z."/>
            <person name="Li S."/>
            <person name="Ye J."/>
            <person name="Wang L."/>
            <person name="Fang L."/>
            <person name="Lei T."/>
            <person name="Chen C.-S."/>
            <person name="Chen H.-C."/>
            <person name="Xu Z."/>
            <person name="Li H."/>
            <person name="Huang H."/>
            <person name="Zhang F."/>
            <person name="Xu H."/>
            <person name="Li N."/>
            <person name="Zhao C."/>
            <person name="Li S."/>
            <person name="Dong L."/>
            <person name="Huang Y."/>
            <person name="Li L."/>
            <person name="Xi Y."/>
            <person name="Qi Q."/>
            <person name="Li W."/>
            <person name="Zhang B."/>
            <person name="Hu W."/>
            <person name="Zhang Y."/>
            <person name="Tian X."/>
            <person name="Jiao Y."/>
            <person name="Liang X."/>
            <person name="Jin J."/>
            <person name="Gao L."/>
            <person name="Zheng W."/>
            <person name="Hao B."/>
            <person name="Liu S.-M."/>
            <person name="Wang W."/>
            <person name="Yuan L."/>
            <person name="Cao M."/>
            <person name="McDermott J."/>
            <person name="Samudrala R."/>
            <person name="Wang J."/>
            <person name="Wong G.K.-S."/>
            <person name="Yang H."/>
        </authorList>
    </citation>
    <scope>NUCLEOTIDE SEQUENCE [LARGE SCALE GENOMIC DNA]</scope>
    <source>
        <strain>cv. Nipponbare</strain>
    </source>
</reference>
<reference key="7">
    <citation type="journal article" date="2003" name="Science">
        <title>Collection, mapping, and annotation of over 28,000 cDNA clones from japonica rice.</title>
        <authorList>
            <consortium name="The rice full-length cDNA consortium"/>
        </authorList>
    </citation>
    <scope>NUCLEOTIDE SEQUENCE [LARGE SCALE MRNA] (ISOFORM 1)</scope>
    <source>
        <strain>cv. Nipponbare</strain>
    </source>
</reference>
<dbReference type="EC" id="2.7.11.1"/>
<dbReference type="EMBL" id="AY336987">
    <property type="protein sequence ID" value="AAQ01193.1"/>
    <property type="molecule type" value="mRNA"/>
</dbReference>
<dbReference type="EMBL" id="AC079022">
    <property type="protein sequence ID" value="AAK73135.1"/>
    <property type="molecule type" value="Genomic_DNA"/>
</dbReference>
<dbReference type="EMBL" id="AC129716">
    <property type="protein sequence ID" value="AAU44135.1"/>
    <property type="molecule type" value="Genomic_DNA"/>
</dbReference>
<dbReference type="EMBL" id="AP008211">
    <property type="protein sequence ID" value="BAF16344.1"/>
    <property type="molecule type" value="Genomic_DNA"/>
</dbReference>
<dbReference type="EMBL" id="AP014961">
    <property type="protein sequence ID" value="BAS91895.1"/>
    <property type="molecule type" value="Genomic_DNA"/>
</dbReference>
<dbReference type="EMBL" id="CM000142">
    <property type="protein sequence ID" value="EEE62052.1"/>
    <property type="molecule type" value="Genomic_DNA"/>
</dbReference>
<dbReference type="EMBL" id="AK070061">
    <property type="status" value="NOT_ANNOTATED_CDS"/>
    <property type="molecule type" value="mRNA"/>
</dbReference>
<dbReference type="RefSeq" id="XP_015640623.1">
    <property type="nucleotide sequence ID" value="XM_015785137.1"/>
</dbReference>
<dbReference type="SMR" id="Q65X23"/>
<dbReference type="FunCoup" id="Q65X23">
    <property type="interactions" value="1049"/>
</dbReference>
<dbReference type="STRING" id="39947.Q65X23"/>
<dbReference type="PaxDb" id="39947-Q65X23"/>
<dbReference type="EnsemblPlants" id="Os05t0108300-01">
    <molecule id="Q65X23-1"/>
    <property type="protein sequence ID" value="Os05t0108300-01"/>
    <property type="gene ID" value="Os05g0108300"/>
</dbReference>
<dbReference type="Gramene" id="Os05t0108300-01">
    <molecule id="Q65X23-1"/>
    <property type="protein sequence ID" value="Os05t0108300-01"/>
    <property type="gene ID" value="Os05g0108300"/>
</dbReference>
<dbReference type="KEGG" id="dosa:Os05g0108300"/>
<dbReference type="eggNOG" id="KOG0584">
    <property type="taxonomic scope" value="Eukaryota"/>
</dbReference>
<dbReference type="HOGENOM" id="CLU_000288_142_3_1"/>
<dbReference type="InParanoid" id="Q65X23"/>
<dbReference type="OMA" id="LAMCGHK"/>
<dbReference type="OrthoDB" id="4062651at2759"/>
<dbReference type="Proteomes" id="UP000000763">
    <property type="component" value="Chromosome 5"/>
</dbReference>
<dbReference type="Proteomes" id="UP000007752">
    <property type="component" value="Chromosome 5"/>
</dbReference>
<dbReference type="Proteomes" id="UP000059680">
    <property type="component" value="Chromosome 5"/>
</dbReference>
<dbReference type="GO" id="GO:0005737">
    <property type="term" value="C:cytoplasm"/>
    <property type="evidence" value="ECO:0000318"/>
    <property type="project" value="GO_Central"/>
</dbReference>
<dbReference type="GO" id="GO:0005524">
    <property type="term" value="F:ATP binding"/>
    <property type="evidence" value="ECO:0007669"/>
    <property type="project" value="UniProtKB-KW"/>
</dbReference>
<dbReference type="GO" id="GO:0106310">
    <property type="term" value="F:protein serine kinase activity"/>
    <property type="evidence" value="ECO:0007669"/>
    <property type="project" value="RHEA"/>
</dbReference>
<dbReference type="GO" id="GO:0004674">
    <property type="term" value="F:protein serine/threonine kinase activity"/>
    <property type="evidence" value="ECO:0000318"/>
    <property type="project" value="GO_Central"/>
</dbReference>
<dbReference type="GO" id="GO:0035556">
    <property type="term" value="P:intracellular signal transduction"/>
    <property type="evidence" value="ECO:0000318"/>
    <property type="project" value="GO_Central"/>
</dbReference>
<dbReference type="CDD" id="cd13983">
    <property type="entry name" value="STKc_WNK"/>
    <property type="match status" value="1"/>
</dbReference>
<dbReference type="FunFam" id="1.10.510.10:FF:002422">
    <property type="match status" value="1"/>
</dbReference>
<dbReference type="FunFam" id="3.30.200.20:FF:000075">
    <property type="entry name" value="Probable serine/threonine-protein kinase WNK1"/>
    <property type="match status" value="1"/>
</dbReference>
<dbReference type="FunFam" id="3.10.20.90:FF:000252">
    <property type="entry name" value="Probable serine/threonine-protein kinase WNK3"/>
    <property type="match status" value="1"/>
</dbReference>
<dbReference type="Gene3D" id="3.10.20.90">
    <property type="entry name" value="Phosphatidylinositol 3-kinase Catalytic Subunit, Chain A, domain 1"/>
    <property type="match status" value="1"/>
</dbReference>
<dbReference type="Gene3D" id="3.30.200.20">
    <property type="entry name" value="Phosphorylase Kinase, domain 1"/>
    <property type="match status" value="1"/>
</dbReference>
<dbReference type="Gene3D" id="1.10.510.10">
    <property type="entry name" value="Transferase(Phosphotransferase) domain 1"/>
    <property type="match status" value="1"/>
</dbReference>
<dbReference type="InterPro" id="IPR011009">
    <property type="entry name" value="Kinase-like_dom_sf"/>
</dbReference>
<dbReference type="InterPro" id="IPR024678">
    <property type="entry name" value="Kinase_OSR1/WNK_CCT"/>
</dbReference>
<dbReference type="InterPro" id="IPR000719">
    <property type="entry name" value="Prot_kinase_dom"/>
</dbReference>
<dbReference type="InterPro" id="IPR008271">
    <property type="entry name" value="Ser/Thr_kinase_AS"/>
</dbReference>
<dbReference type="InterPro" id="IPR050588">
    <property type="entry name" value="WNK_Ser-Thr_kinase"/>
</dbReference>
<dbReference type="PANTHER" id="PTHR13902">
    <property type="entry name" value="SERINE/THREONINE-PROTEIN KINASE WNK WITH NO LYSINE -RELATED"/>
    <property type="match status" value="1"/>
</dbReference>
<dbReference type="Pfam" id="PF12202">
    <property type="entry name" value="OSR1_C"/>
    <property type="match status" value="1"/>
</dbReference>
<dbReference type="Pfam" id="PF00069">
    <property type="entry name" value="Pkinase"/>
    <property type="match status" value="1"/>
</dbReference>
<dbReference type="SMART" id="SM00220">
    <property type="entry name" value="S_TKc"/>
    <property type="match status" value="1"/>
</dbReference>
<dbReference type="SUPFAM" id="SSF56112">
    <property type="entry name" value="Protein kinase-like (PK-like)"/>
    <property type="match status" value="1"/>
</dbReference>
<dbReference type="PROSITE" id="PS50011">
    <property type="entry name" value="PROTEIN_KINASE_DOM"/>
    <property type="match status" value="1"/>
</dbReference>
<dbReference type="PROSITE" id="PS00108">
    <property type="entry name" value="PROTEIN_KINASE_ST"/>
    <property type="match status" value="1"/>
</dbReference>
<feature type="chain" id="PRO_0000351672" description="Probable serine/threonine-protein kinase WNK2">
    <location>
        <begin position="1"/>
        <end position="621"/>
    </location>
</feature>
<feature type="domain" description="Protein kinase" evidence="3">
    <location>
        <begin position="28"/>
        <end position="286"/>
    </location>
</feature>
<feature type="region of interest" description="Disordered" evidence="4">
    <location>
        <begin position="438"/>
        <end position="490"/>
    </location>
</feature>
<feature type="region of interest" description="Disordered" evidence="4">
    <location>
        <begin position="501"/>
        <end position="520"/>
    </location>
</feature>
<feature type="region of interest" description="Disordered" evidence="4">
    <location>
        <begin position="527"/>
        <end position="553"/>
    </location>
</feature>
<feature type="region of interest" description="Disordered" evidence="4">
    <location>
        <begin position="600"/>
        <end position="621"/>
    </location>
</feature>
<feature type="active site" description="Proton acceptor" evidence="2">
    <location>
        <position position="175"/>
    </location>
</feature>
<feature type="binding site" evidence="1">
    <location>
        <begin position="108"/>
        <end position="111"/>
    </location>
    <ligand>
        <name>ATP</name>
        <dbReference type="ChEBI" id="CHEBI:30616"/>
    </ligand>
</feature>
<feature type="binding site" evidence="1">
    <location>
        <position position="158"/>
    </location>
    <ligand>
        <name>ATP</name>
        <dbReference type="ChEBI" id="CHEBI:30616"/>
    </ligand>
</feature>
<feature type="splice variant" id="VSP_035536" description="In isoform 2." evidence="5">
    <original>MPPTPPPELDLLDTEPEFAEVDPTARYGRYTEVLGKGAFKTV</original>
    <variation>MHAASCSTRRSSARAPSRRCILLPTLDFWALTCDSVC</variation>
    <location>
        <begin position="1"/>
        <end position="42"/>
    </location>
</feature>
<feature type="splice variant" id="VSP_035537" description="In isoform 2." evidence="5">
    <location>
        <begin position="305"/>
        <end position="359"/>
    </location>
</feature>
<feature type="splice variant" id="VSP_035538" description="In isoform 2." evidence="5">
    <location>
        <begin position="547"/>
        <end position="565"/>
    </location>
</feature>
<feature type="sequence conflict" description="In Ref. 7; AK070061." evidence="6" ref="7">
    <original>Q</original>
    <variation>L</variation>
    <location>
        <position position="298"/>
    </location>
</feature>
<feature type="sequence conflict" description="In Ref. 7; AK070061." evidence="6" ref="7">
    <original>D</original>
    <variation>N</variation>
    <location>
        <position position="539"/>
    </location>
</feature>
<proteinExistence type="evidence at transcript level"/>
<name>WNK2_ORYSJ</name>
<gene>
    <name type="primary">WNK2</name>
    <name type="synonym">RDRS1</name>
    <name type="ordered locus">Os05g0108300</name>
    <name type="ordered locus">LOC_Os05g01780</name>
    <name evidence="7" type="ORF">OsJ_16836</name>
    <name type="ORF">OSJNBa0068N01.12</name>
</gene>